<organism>
    <name type="scientific">Dictyostelium discoideum</name>
    <name type="common">Social amoeba</name>
    <dbReference type="NCBI Taxonomy" id="44689"/>
    <lineage>
        <taxon>Eukaryota</taxon>
        <taxon>Amoebozoa</taxon>
        <taxon>Evosea</taxon>
        <taxon>Eumycetozoa</taxon>
        <taxon>Dictyostelia</taxon>
        <taxon>Dictyosteliales</taxon>
        <taxon>Dictyosteliaceae</taxon>
        <taxon>Dictyostelium</taxon>
    </lineage>
</organism>
<proteinExistence type="predicted"/>
<sequence>MTLIKSITSINFKKSNSNSPSMINLNSNYYNNNNNKFQFDNTISEGFDILISNRSPQLRWWIRWWDSYSQ</sequence>
<dbReference type="EMBL" id="AAFI02000098">
    <property type="protein sequence ID" value="EAL63847.1"/>
    <property type="molecule type" value="Genomic_DNA"/>
</dbReference>
<dbReference type="RefSeq" id="XP_637355.1">
    <property type="nucleotide sequence ID" value="XM_632263.1"/>
</dbReference>
<dbReference type="PaxDb" id="44689-DDB0187300"/>
<dbReference type="EnsemblProtists" id="EAL63847">
    <property type="protein sequence ID" value="EAL63847"/>
    <property type="gene ID" value="DDB_G0287145"/>
</dbReference>
<dbReference type="GeneID" id="8625977"/>
<dbReference type="KEGG" id="ddi:DDB_G0287145"/>
<dbReference type="dictyBase" id="DDB_G0287145"/>
<dbReference type="VEuPathDB" id="AmoebaDB:DDB_G0287145"/>
<dbReference type="HOGENOM" id="CLU_2763181_0_0_1"/>
<dbReference type="InParanoid" id="Q54KS5"/>
<dbReference type="PRO" id="PR:Q54KS5"/>
<dbReference type="Proteomes" id="UP000002195">
    <property type="component" value="Chromosome 4"/>
</dbReference>
<name>Y7300_DICDI</name>
<gene>
    <name type="ORF">DDB_G0287145</name>
</gene>
<feature type="chain" id="PRO_0000347040" description="Putative uncharacterized protein DDB_G0287145">
    <location>
        <begin position="1"/>
        <end position="70"/>
    </location>
</feature>
<keyword id="KW-1185">Reference proteome</keyword>
<protein>
    <recommendedName>
        <fullName>Putative uncharacterized protein DDB_G0287145</fullName>
    </recommendedName>
</protein>
<reference key="1">
    <citation type="journal article" date="2005" name="Nature">
        <title>The genome of the social amoeba Dictyostelium discoideum.</title>
        <authorList>
            <person name="Eichinger L."/>
            <person name="Pachebat J.A."/>
            <person name="Gloeckner G."/>
            <person name="Rajandream M.A."/>
            <person name="Sucgang R."/>
            <person name="Berriman M."/>
            <person name="Song J."/>
            <person name="Olsen R."/>
            <person name="Szafranski K."/>
            <person name="Xu Q."/>
            <person name="Tunggal B."/>
            <person name="Kummerfeld S."/>
            <person name="Madera M."/>
            <person name="Konfortov B.A."/>
            <person name="Rivero F."/>
            <person name="Bankier A.T."/>
            <person name="Lehmann R."/>
            <person name="Hamlin N."/>
            <person name="Davies R."/>
            <person name="Gaudet P."/>
            <person name="Fey P."/>
            <person name="Pilcher K."/>
            <person name="Chen G."/>
            <person name="Saunders D."/>
            <person name="Sodergren E.J."/>
            <person name="Davis P."/>
            <person name="Kerhornou A."/>
            <person name="Nie X."/>
            <person name="Hall N."/>
            <person name="Anjard C."/>
            <person name="Hemphill L."/>
            <person name="Bason N."/>
            <person name="Farbrother P."/>
            <person name="Desany B."/>
            <person name="Just E."/>
            <person name="Morio T."/>
            <person name="Rost R."/>
            <person name="Churcher C.M."/>
            <person name="Cooper J."/>
            <person name="Haydock S."/>
            <person name="van Driessche N."/>
            <person name="Cronin A."/>
            <person name="Goodhead I."/>
            <person name="Muzny D.M."/>
            <person name="Mourier T."/>
            <person name="Pain A."/>
            <person name="Lu M."/>
            <person name="Harper D."/>
            <person name="Lindsay R."/>
            <person name="Hauser H."/>
            <person name="James K.D."/>
            <person name="Quiles M."/>
            <person name="Madan Babu M."/>
            <person name="Saito T."/>
            <person name="Buchrieser C."/>
            <person name="Wardroper A."/>
            <person name="Felder M."/>
            <person name="Thangavelu M."/>
            <person name="Johnson D."/>
            <person name="Knights A."/>
            <person name="Loulseged H."/>
            <person name="Mungall K.L."/>
            <person name="Oliver K."/>
            <person name="Price C."/>
            <person name="Quail M.A."/>
            <person name="Urushihara H."/>
            <person name="Hernandez J."/>
            <person name="Rabbinowitsch E."/>
            <person name="Steffen D."/>
            <person name="Sanders M."/>
            <person name="Ma J."/>
            <person name="Kohara Y."/>
            <person name="Sharp S."/>
            <person name="Simmonds M.N."/>
            <person name="Spiegler S."/>
            <person name="Tivey A."/>
            <person name="Sugano S."/>
            <person name="White B."/>
            <person name="Walker D."/>
            <person name="Woodward J.R."/>
            <person name="Winckler T."/>
            <person name="Tanaka Y."/>
            <person name="Shaulsky G."/>
            <person name="Schleicher M."/>
            <person name="Weinstock G.M."/>
            <person name="Rosenthal A."/>
            <person name="Cox E.C."/>
            <person name="Chisholm R.L."/>
            <person name="Gibbs R.A."/>
            <person name="Loomis W.F."/>
            <person name="Platzer M."/>
            <person name="Kay R.R."/>
            <person name="Williams J.G."/>
            <person name="Dear P.H."/>
            <person name="Noegel A.A."/>
            <person name="Barrell B.G."/>
            <person name="Kuspa A."/>
        </authorList>
    </citation>
    <scope>NUCLEOTIDE SEQUENCE [LARGE SCALE GENOMIC DNA]</scope>
    <source>
        <strain>AX4</strain>
    </source>
</reference>
<accession>Q54KS5</accession>